<accession>C6DHT0</accession>
<keyword id="KW-0963">Cytoplasm</keyword>
<keyword id="KW-0227">DNA damage</keyword>
<keyword id="KW-0234">DNA repair</keyword>
<keyword id="KW-0255">Endonuclease</keyword>
<keyword id="KW-0378">Hydrolase</keyword>
<keyword id="KW-0460">Magnesium</keyword>
<keyword id="KW-0479">Metal-binding</keyword>
<keyword id="KW-0540">Nuclease</keyword>
<protein>
    <recommendedName>
        <fullName evidence="1">Endonuclease V</fullName>
        <ecNumber evidence="1">3.1.21.7</ecNumber>
    </recommendedName>
    <alternativeName>
        <fullName evidence="1">Deoxyinosine 3'endonuclease</fullName>
    </alternativeName>
    <alternativeName>
        <fullName evidence="1">Deoxyribonuclease V</fullName>
        <shortName evidence="1">DNase V</shortName>
    </alternativeName>
</protein>
<name>NFI_PECCP</name>
<evidence type="ECO:0000255" key="1">
    <source>
        <dbReference type="HAMAP-Rule" id="MF_00801"/>
    </source>
</evidence>
<comment type="function">
    <text evidence="1">DNA repair enzyme involved in the repair of deaminated bases. Selectively cleaves double-stranded DNA at the second phosphodiester bond 3' to a deoxyinosine leaving behind the intact lesion on the nicked DNA.</text>
</comment>
<comment type="catalytic activity">
    <reaction evidence="1">
        <text>Endonucleolytic cleavage at apurinic or apyrimidinic sites to products with a 5'-phosphate.</text>
        <dbReference type="EC" id="3.1.21.7"/>
    </reaction>
</comment>
<comment type="cofactor">
    <cofactor evidence="1">
        <name>Mg(2+)</name>
        <dbReference type="ChEBI" id="CHEBI:18420"/>
    </cofactor>
</comment>
<comment type="subcellular location">
    <subcellularLocation>
        <location evidence="1">Cytoplasm</location>
    </subcellularLocation>
</comment>
<comment type="similarity">
    <text evidence="1">Belongs to the endonuclease V family.</text>
</comment>
<proteinExistence type="inferred from homology"/>
<organism>
    <name type="scientific">Pectobacterium carotovorum subsp. carotovorum (strain PC1)</name>
    <dbReference type="NCBI Taxonomy" id="561230"/>
    <lineage>
        <taxon>Bacteria</taxon>
        <taxon>Pseudomonadati</taxon>
        <taxon>Pseudomonadota</taxon>
        <taxon>Gammaproteobacteria</taxon>
        <taxon>Enterobacterales</taxon>
        <taxon>Pectobacteriaceae</taxon>
        <taxon>Pectobacterium</taxon>
    </lineage>
</organism>
<gene>
    <name evidence="1" type="primary">nfi</name>
    <name type="ordered locus">PC1_0220</name>
</gene>
<reference key="1">
    <citation type="submission" date="2009-07" db="EMBL/GenBank/DDBJ databases">
        <title>Complete sequence of Pectobacterium carotovorum subsp. carotovorum PC1.</title>
        <authorList>
            <consortium name="US DOE Joint Genome Institute"/>
            <person name="Lucas S."/>
            <person name="Copeland A."/>
            <person name="Lapidus A."/>
            <person name="Glavina del Rio T."/>
            <person name="Tice H."/>
            <person name="Bruce D."/>
            <person name="Goodwin L."/>
            <person name="Pitluck S."/>
            <person name="Munk A.C."/>
            <person name="Brettin T."/>
            <person name="Detter J.C."/>
            <person name="Han C."/>
            <person name="Tapia R."/>
            <person name="Larimer F."/>
            <person name="Land M."/>
            <person name="Hauser L."/>
            <person name="Kyrpides N."/>
            <person name="Mikhailova N."/>
            <person name="Balakrishnan V."/>
            <person name="Glasner J."/>
            <person name="Perna N.T."/>
        </authorList>
    </citation>
    <scope>NUCLEOTIDE SEQUENCE [LARGE SCALE GENOMIC DNA]</scope>
    <source>
        <strain>PC1</strain>
    </source>
</reference>
<dbReference type="EC" id="3.1.21.7" evidence="1"/>
<dbReference type="EMBL" id="CP001657">
    <property type="protein sequence ID" value="ACT11280.1"/>
    <property type="molecule type" value="Genomic_DNA"/>
</dbReference>
<dbReference type="RefSeq" id="WP_012772949.1">
    <property type="nucleotide sequence ID" value="NC_012917.1"/>
</dbReference>
<dbReference type="SMR" id="C6DHT0"/>
<dbReference type="STRING" id="561230.PC1_0220"/>
<dbReference type="KEGG" id="pct:PC1_0220"/>
<dbReference type="eggNOG" id="COG1515">
    <property type="taxonomic scope" value="Bacteria"/>
</dbReference>
<dbReference type="HOGENOM" id="CLU_047631_1_0_6"/>
<dbReference type="OrthoDB" id="9790916at2"/>
<dbReference type="Proteomes" id="UP000002736">
    <property type="component" value="Chromosome"/>
</dbReference>
<dbReference type="GO" id="GO:0005737">
    <property type="term" value="C:cytoplasm"/>
    <property type="evidence" value="ECO:0007669"/>
    <property type="project" value="UniProtKB-SubCell"/>
</dbReference>
<dbReference type="GO" id="GO:0043737">
    <property type="term" value="F:deoxyribonuclease V activity"/>
    <property type="evidence" value="ECO:0007669"/>
    <property type="project" value="UniProtKB-UniRule"/>
</dbReference>
<dbReference type="GO" id="GO:0000287">
    <property type="term" value="F:magnesium ion binding"/>
    <property type="evidence" value="ECO:0007669"/>
    <property type="project" value="UniProtKB-UniRule"/>
</dbReference>
<dbReference type="GO" id="GO:0016891">
    <property type="term" value="F:RNA endonuclease activity, producing 5'-phosphomonoesters"/>
    <property type="evidence" value="ECO:0007669"/>
    <property type="project" value="TreeGrafter"/>
</dbReference>
<dbReference type="GO" id="GO:0003727">
    <property type="term" value="F:single-stranded RNA binding"/>
    <property type="evidence" value="ECO:0007669"/>
    <property type="project" value="TreeGrafter"/>
</dbReference>
<dbReference type="GO" id="GO:0006281">
    <property type="term" value="P:DNA repair"/>
    <property type="evidence" value="ECO:0007669"/>
    <property type="project" value="UniProtKB-UniRule"/>
</dbReference>
<dbReference type="CDD" id="cd06559">
    <property type="entry name" value="Endonuclease_V"/>
    <property type="match status" value="1"/>
</dbReference>
<dbReference type="FunFam" id="3.30.2170.10:FF:000001">
    <property type="entry name" value="Endonuclease V"/>
    <property type="match status" value="1"/>
</dbReference>
<dbReference type="Gene3D" id="3.30.2170.10">
    <property type="entry name" value="archaeoglobus fulgidus dsm 4304 superfamily"/>
    <property type="match status" value="1"/>
</dbReference>
<dbReference type="HAMAP" id="MF_00801">
    <property type="entry name" value="Endonuclease_5"/>
    <property type="match status" value="1"/>
</dbReference>
<dbReference type="InterPro" id="IPR007581">
    <property type="entry name" value="Endonuclease-V"/>
</dbReference>
<dbReference type="NCBIfam" id="NF008629">
    <property type="entry name" value="PRK11617.1"/>
    <property type="match status" value="1"/>
</dbReference>
<dbReference type="PANTHER" id="PTHR28511">
    <property type="entry name" value="ENDONUCLEASE V"/>
    <property type="match status" value="1"/>
</dbReference>
<dbReference type="PANTHER" id="PTHR28511:SF1">
    <property type="entry name" value="ENDONUCLEASE V"/>
    <property type="match status" value="1"/>
</dbReference>
<dbReference type="Pfam" id="PF04493">
    <property type="entry name" value="Endonuclease_5"/>
    <property type="match status" value="1"/>
</dbReference>
<feature type="chain" id="PRO_1000212976" description="Endonuclease V">
    <location>
        <begin position="1"/>
        <end position="229"/>
    </location>
</feature>
<feature type="binding site" evidence="1">
    <location>
        <position position="36"/>
    </location>
    <ligand>
        <name>Mg(2+)</name>
        <dbReference type="ChEBI" id="CHEBI:18420"/>
    </ligand>
</feature>
<feature type="binding site" evidence="1">
    <location>
        <position position="104"/>
    </location>
    <ligand>
        <name>Mg(2+)</name>
        <dbReference type="ChEBI" id="CHEBI:18420"/>
    </ligand>
</feature>
<feature type="site" description="Interaction with target DNA" evidence="1">
    <location>
        <position position="74"/>
    </location>
</feature>
<sequence>MIDTQQLRAEQLARASDVIRHDDLPFEQPAFIAGADVGFEQEGSVTRAAIAVMRYPSLELVEYKIARISTTMPYIPGFLSFRECPGLLAAWALLEQKPDLLFVDGHGISHPRRLGVASHFGLLVDVPTIGVAKSRLCGRFEPLTESVGSQQPLLDKGEQIGWVWRSKARCNPLFVATGHRVSQDSALHWVQSCMRGYRLPEPTRWADAVASNRPAFVRWQRQQAANVLS</sequence>